<proteinExistence type="evidence at transcript level"/>
<evidence type="ECO:0000250" key="1"/>
<evidence type="ECO:0000255" key="2">
    <source>
        <dbReference type="PROSITE-ProRule" id="PRU00243"/>
    </source>
</evidence>
<evidence type="ECO:0000305" key="3"/>
<gene>
    <name type="ordered locus">At4g40080</name>
    <name type="ORF">T5J17.250</name>
</gene>
<keyword id="KW-0168">Coated pit</keyword>
<keyword id="KW-0968">Cytoplasmic vesicle</keyword>
<keyword id="KW-0254">Endocytosis</keyword>
<keyword id="KW-0333">Golgi apparatus</keyword>
<keyword id="KW-0472">Membrane</keyword>
<keyword id="KW-1185">Reference proteome</keyword>
<comment type="subcellular location">
    <subcellularLocation>
        <location evidence="1">Membrane</location>
        <location evidence="1">Clathrin-coated pit</location>
    </subcellularLocation>
    <subcellularLocation>
        <location evidence="1">Golgi apparatus</location>
    </subcellularLocation>
    <subcellularLocation>
        <location evidence="1">Cytoplasmic vesicle</location>
        <location evidence="1">Clathrin-coated vesicle</location>
    </subcellularLocation>
    <text evidence="1">Colocalized with clathrin in the Golgi area.</text>
</comment>
<reference key="1">
    <citation type="journal article" date="1999" name="Nature">
        <title>Sequence and analysis of chromosome 4 of the plant Arabidopsis thaliana.</title>
        <authorList>
            <person name="Mayer K.F.X."/>
            <person name="Schueller C."/>
            <person name="Wambutt R."/>
            <person name="Murphy G."/>
            <person name="Volckaert G."/>
            <person name="Pohl T."/>
            <person name="Duesterhoeft A."/>
            <person name="Stiekema W."/>
            <person name="Entian K.-D."/>
            <person name="Terryn N."/>
            <person name="Harris B."/>
            <person name="Ansorge W."/>
            <person name="Brandt P."/>
            <person name="Grivell L.A."/>
            <person name="Rieger M."/>
            <person name="Weichselgartner M."/>
            <person name="de Simone V."/>
            <person name="Obermaier B."/>
            <person name="Mache R."/>
            <person name="Mueller M."/>
            <person name="Kreis M."/>
            <person name="Delseny M."/>
            <person name="Puigdomenech P."/>
            <person name="Watson M."/>
            <person name="Schmidtheini T."/>
            <person name="Reichert B."/>
            <person name="Portetelle D."/>
            <person name="Perez-Alonso M."/>
            <person name="Boutry M."/>
            <person name="Bancroft I."/>
            <person name="Vos P."/>
            <person name="Hoheisel J."/>
            <person name="Zimmermann W."/>
            <person name="Wedler H."/>
            <person name="Ridley P."/>
            <person name="Langham S.-A."/>
            <person name="McCullagh B."/>
            <person name="Bilham L."/>
            <person name="Robben J."/>
            <person name="van der Schueren J."/>
            <person name="Grymonprez B."/>
            <person name="Chuang Y.-J."/>
            <person name="Vandenbussche F."/>
            <person name="Braeken M."/>
            <person name="Weltjens I."/>
            <person name="Voet M."/>
            <person name="Bastiaens I."/>
            <person name="Aert R."/>
            <person name="Defoor E."/>
            <person name="Weitzenegger T."/>
            <person name="Bothe G."/>
            <person name="Ramsperger U."/>
            <person name="Hilbert H."/>
            <person name="Braun M."/>
            <person name="Holzer E."/>
            <person name="Brandt A."/>
            <person name="Peters S."/>
            <person name="van Staveren M."/>
            <person name="Dirkse W."/>
            <person name="Mooijman P."/>
            <person name="Klein Lankhorst R."/>
            <person name="Rose M."/>
            <person name="Hauf J."/>
            <person name="Koetter P."/>
            <person name="Berneiser S."/>
            <person name="Hempel S."/>
            <person name="Feldpausch M."/>
            <person name="Lamberth S."/>
            <person name="Van den Daele H."/>
            <person name="De Keyser A."/>
            <person name="Buysshaert C."/>
            <person name="Gielen J."/>
            <person name="Villarroel R."/>
            <person name="De Clercq R."/>
            <person name="van Montagu M."/>
            <person name="Rogers J."/>
            <person name="Cronin A."/>
            <person name="Quail M.A."/>
            <person name="Bray-Allen S."/>
            <person name="Clark L."/>
            <person name="Doggett J."/>
            <person name="Hall S."/>
            <person name="Kay M."/>
            <person name="Lennard N."/>
            <person name="McLay K."/>
            <person name="Mayes R."/>
            <person name="Pettett A."/>
            <person name="Rajandream M.A."/>
            <person name="Lyne M."/>
            <person name="Benes V."/>
            <person name="Rechmann S."/>
            <person name="Borkova D."/>
            <person name="Bloecker H."/>
            <person name="Scharfe M."/>
            <person name="Grimm M."/>
            <person name="Loehnert T.-H."/>
            <person name="Dose S."/>
            <person name="de Haan M."/>
            <person name="Maarse A.C."/>
            <person name="Schaefer M."/>
            <person name="Mueller-Auer S."/>
            <person name="Gabel C."/>
            <person name="Fuchs M."/>
            <person name="Fartmann B."/>
            <person name="Granderath K."/>
            <person name="Dauner D."/>
            <person name="Herzl A."/>
            <person name="Neumann S."/>
            <person name="Argiriou A."/>
            <person name="Vitale D."/>
            <person name="Liguori R."/>
            <person name="Piravandi E."/>
            <person name="Massenet O."/>
            <person name="Quigley F."/>
            <person name="Clabauld G."/>
            <person name="Muendlein A."/>
            <person name="Felber R."/>
            <person name="Schnabl S."/>
            <person name="Hiller R."/>
            <person name="Schmidt W."/>
            <person name="Lecharny A."/>
            <person name="Aubourg S."/>
            <person name="Chefdor F."/>
            <person name="Cooke R."/>
            <person name="Berger C."/>
            <person name="Monfort A."/>
            <person name="Casacuberta E."/>
            <person name="Gibbons T."/>
            <person name="Weber N."/>
            <person name="Vandenbol M."/>
            <person name="Bargues M."/>
            <person name="Terol J."/>
            <person name="Torres A."/>
            <person name="Perez-Perez A."/>
            <person name="Purnelle B."/>
            <person name="Bent E."/>
            <person name="Johnson S."/>
            <person name="Tacon D."/>
            <person name="Jesse T."/>
            <person name="Heijnen L."/>
            <person name="Schwarz S."/>
            <person name="Scholler P."/>
            <person name="Heber S."/>
            <person name="Francs P."/>
            <person name="Bielke C."/>
            <person name="Frishman D."/>
            <person name="Haase D."/>
            <person name="Lemcke K."/>
            <person name="Mewes H.-W."/>
            <person name="Stocker S."/>
            <person name="Zaccaria P."/>
            <person name="Bevan M."/>
            <person name="Wilson R.K."/>
            <person name="de la Bastide M."/>
            <person name="Habermann K."/>
            <person name="Parnell L."/>
            <person name="Dedhia N."/>
            <person name="Gnoj L."/>
            <person name="Schutz K."/>
            <person name="Huang E."/>
            <person name="Spiegel L."/>
            <person name="Sekhon M."/>
            <person name="Murray J."/>
            <person name="Sheet P."/>
            <person name="Cordes M."/>
            <person name="Abu-Threideh J."/>
            <person name="Stoneking T."/>
            <person name="Kalicki J."/>
            <person name="Graves T."/>
            <person name="Harmon G."/>
            <person name="Edwards J."/>
            <person name="Latreille P."/>
            <person name="Courtney L."/>
            <person name="Cloud J."/>
            <person name="Abbott A."/>
            <person name="Scott K."/>
            <person name="Johnson D."/>
            <person name="Minx P."/>
            <person name="Bentley D."/>
            <person name="Fulton B."/>
            <person name="Miller N."/>
            <person name="Greco T."/>
            <person name="Kemp K."/>
            <person name="Kramer J."/>
            <person name="Fulton L."/>
            <person name="Mardis E."/>
            <person name="Dante M."/>
            <person name="Pepin K."/>
            <person name="Hillier L.W."/>
            <person name="Nelson J."/>
            <person name="Spieth J."/>
            <person name="Ryan E."/>
            <person name="Andrews S."/>
            <person name="Geisel C."/>
            <person name="Layman D."/>
            <person name="Du H."/>
            <person name="Ali J."/>
            <person name="Berghoff A."/>
            <person name="Jones K."/>
            <person name="Drone K."/>
            <person name="Cotton M."/>
            <person name="Joshu C."/>
            <person name="Antonoiu B."/>
            <person name="Zidanic M."/>
            <person name="Strong C."/>
            <person name="Sun H."/>
            <person name="Lamar B."/>
            <person name="Yordan C."/>
            <person name="Ma P."/>
            <person name="Zhong J."/>
            <person name="Preston R."/>
            <person name="Vil D."/>
            <person name="Shekher M."/>
            <person name="Matero A."/>
            <person name="Shah R."/>
            <person name="Swaby I.K."/>
            <person name="O'Shaughnessy A."/>
            <person name="Rodriguez M."/>
            <person name="Hoffman J."/>
            <person name="Till S."/>
            <person name="Granat S."/>
            <person name="Shohdy N."/>
            <person name="Hasegawa A."/>
            <person name="Hameed A."/>
            <person name="Lodhi M."/>
            <person name="Johnson A."/>
            <person name="Chen E."/>
            <person name="Marra M.A."/>
            <person name="Martienssen R."/>
            <person name="McCombie W.R."/>
        </authorList>
    </citation>
    <scope>NUCLEOTIDE SEQUENCE [LARGE SCALE GENOMIC DNA]</scope>
    <source>
        <strain>cv. Columbia</strain>
    </source>
</reference>
<reference key="2">
    <citation type="journal article" date="2017" name="Plant J.">
        <title>Araport11: a complete reannotation of the Arabidopsis thaliana reference genome.</title>
        <authorList>
            <person name="Cheng C.Y."/>
            <person name="Krishnakumar V."/>
            <person name="Chan A.P."/>
            <person name="Thibaud-Nissen F."/>
            <person name="Schobel S."/>
            <person name="Town C.D."/>
        </authorList>
    </citation>
    <scope>GENOME REANNOTATION</scope>
    <source>
        <strain>cv. Columbia</strain>
    </source>
</reference>
<reference key="3">
    <citation type="submission" date="2002-03" db="EMBL/GenBank/DDBJ databases">
        <title>Full-length cDNA from Arabidopsis thaliana.</title>
        <authorList>
            <person name="Brover V.V."/>
            <person name="Troukhan M.E."/>
            <person name="Alexandrov N.A."/>
            <person name="Lu Y.-P."/>
            <person name="Flavell R.B."/>
            <person name="Feldmann K.A."/>
        </authorList>
    </citation>
    <scope>NUCLEOTIDE SEQUENCE [LARGE SCALE MRNA]</scope>
</reference>
<feature type="chain" id="PRO_0000187082" description="Putative clathrin assembly protein At4g40080">
    <location>
        <begin position="1"/>
        <end position="365"/>
    </location>
</feature>
<feature type="domain" description="ENTH" evidence="2">
    <location>
        <begin position="29"/>
        <end position="167"/>
    </location>
</feature>
<feature type="sequence conflict" description="In Ref. 3; AAM66978." evidence="3" ref="3">
    <location>
        <position position="64"/>
    </location>
</feature>
<feature type="sequence conflict" description="In Ref. 3; AAM66978." evidence="3" ref="3">
    <original>A</original>
    <variation>P</variation>
    <location>
        <position position="220"/>
    </location>
</feature>
<protein>
    <recommendedName>
        <fullName>Putative clathrin assembly protein At4g40080</fullName>
    </recommendedName>
</protein>
<organism>
    <name type="scientific">Arabidopsis thaliana</name>
    <name type="common">Mouse-ear cress</name>
    <dbReference type="NCBI Taxonomy" id="3702"/>
    <lineage>
        <taxon>Eukaryota</taxon>
        <taxon>Viridiplantae</taxon>
        <taxon>Streptophyta</taxon>
        <taxon>Embryophyta</taxon>
        <taxon>Tracheophyta</taxon>
        <taxon>Spermatophyta</taxon>
        <taxon>Magnoliopsida</taxon>
        <taxon>eudicotyledons</taxon>
        <taxon>Gunneridae</taxon>
        <taxon>Pentapetalae</taxon>
        <taxon>rosids</taxon>
        <taxon>malvids</taxon>
        <taxon>Brassicales</taxon>
        <taxon>Brassicaceae</taxon>
        <taxon>Camelineae</taxon>
        <taxon>Arabidopsis</taxon>
    </lineage>
</organism>
<dbReference type="EMBL" id="AL035708">
    <property type="protein sequence ID" value="CAB56391.1"/>
    <property type="molecule type" value="Genomic_DNA"/>
</dbReference>
<dbReference type="EMBL" id="AL161596">
    <property type="protein sequence ID" value="CAB80671.1"/>
    <property type="molecule type" value="Genomic_DNA"/>
</dbReference>
<dbReference type="EMBL" id="CP002687">
    <property type="protein sequence ID" value="AEE87165.1"/>
    <property type="molecule type" value="Genomic_DNA"/>
</dbReference>
<dbReference type="EMBL" id="AY088656">
    <property type="protein sequence ID" value="AAM66978.1"/>
    <property type="molecule type" value="mRNA"/>
</dbReference>
<dbReference type="PIR" id="A85475">
    <property type="entry name" value="A85475"/>
</dbReference>
<dbReference type="RefSeq" id="NP_195718.1">
    <property type="nucleotide sequence ID" value="NM_120173.2"/>
</dbReference>
<dbReference type="SMR" id="Q8L936"/>
<dbReference type="FunCoup" id="Q8L936">
    <property type="interactions" value="17"/>
</dbReference>
<dbReference type="STRING" id="3702.Q8L936"/>
<dbReference type="iPTMnet" id="Q8L936"/>
<dbReference type="PaxDb" id="3702-AT4G40080.1"/>
<dbReference type="ProteomicsDB" id="240317"/>
<dbReference type="EnsemblPlants" id="AT4G40080.1">
    <property type="protein sequence ID" value="AT4G40080.1"/>
    <property type="gene ID" value="AT4G40080"/>
</dbReference>
<dbReference type="GeneID" id="830171"/>
<dbReference type="Gramene" id="AT4G40080.1">
    <property type="protein sequence ID" value="AT4G40080.1"/>
    <property type="gene ID" value="AT4G40080"/>
</dbReference>
<dbReference type="KEGG" id="ath:AT4G40080"/>
<dbReference type="Araport" id="AT4G40080"/>
<dbReference type="TAIR" id="AT4G40080">
    <property type="gene designation" value="PICALM10A"/>
</dbReference>
<dbReference type="eggNOG" id="KOG0251">
    <property type="taxonomic scope" value="Eukaryota"/>
</dbReference>
<dbReference type="HOGENOM" id="CLU_073451_0_0_1"/>
<dbReference type="InParanoid" id="Q8L936"/>
<dbReference type="OMA" id="PSTELLW"/>
<dbReference type="OrthoDB" id="44015at2759"/>
<dbReference type="PhylomeDB" id="Q8L936"/>
<dbReference type="PRO" id="PR:Q8L936"/>
<dbReference type="Proteomes" id="UP000006548">
    <property type="component" value="Chromosome 4"/>
</dbReference>
<dbReference type="ExpressionAtlas" id="Q8L936">
    <property type="expression patterns" value="differential"/>
</dbReference>
<dbReference type="GO" id="GO:0005905">
    <property type="term" value="C:clathrin-coated pit"/>
    <property type="evidence" value="ECO:0007669"/>
    <property type="project" value="UniProtKB-SubCell"/>
</dbReference>
<dbReference type="GO" id="GO:0030136">
    <property type="term" value="C:clathrin-coated vesicle"/>
    <property type="evidence" value="ECO:0007669"/>
    <property type="project" value="UniProtKB-SubCell"/>
</dbReference>
<dbReference type="GO" id="GO:0005794">
    <property type="term" value="C:Golgi apparatus"/>
    <property type="evidence" value="ECO:0007669"/>
    <property type="project" value="UniProtKB-SubCell"/>
</dbReference>
<dbReference type="GO" id="GO:0005543">
    <property type="term" value="F:phospholipid binding"/>
    <property type="evidence" value="ECO:0007669"/>
    <property type="project" value="InterPro"/>
</dbReference>
<dbReference type="GO" id="GO:0048268">
    <property type="term" value="P:clathrin coat assembly"/>
    <property type="evidence" value="ECO:0007669"/>
    <property type="project" value="InterPro"/>
</dbReference>
<dbReference type="GO" id="GO:0072583">
    <property type="term" value="P:clathrin-dependent endocytosis"/>
    <property type="evidence" value="ECO:0007669"/>
    <property type="project" value="InterPro"/>
</dbReference>
<dbReference type="CDD" id="cd16987">
    <property type="entry name" value="ANTH_N_AP180_plant"/>
    <property type="match status" value="1"/>
</dbReference>
<dbReference type="FunFam" id="1.25.40.90:FF:000035">
    <property type="entry name" value="Putative clathrin assembly protein At4g40080"/>
    <property type="match status" value="1"/>
</dbReference>
<dbReference type="Gene3D" id="1.25.40.90">
    <property type="match status" value="1"/>
</dbReference>
<dbReference type="InterPro" id="IPR011417">
    <property type="entry name" value="ANTH_dom"/>
</dbReference>
<dbReference type="InterPro" id="IPR048050">
    <property type="entry name" value="ANTH_N_plant"/>
</dbReference>
<dbReference type="InterPro" id="IPR045192">
    <property type="entry name" value="AP180-like"/>
</dbReference>
<dbReference type="InterPro" id="IPR013809">
    <property type="entry name" value="ENTH"/>
</dbReference>
<dbReference type="InterPro" id="IPR008942">
    <property type="entry name" value="ENTH_VHS"/>
</dbReference>
<dbReference type="PANTHER" id="PTHR22951">
    <property type="entry name" value="CLATHRIN ASSEMBLY PROTEIN"/>
    <property type="match status" value="1"/>
</dbReference>
<dbReference type="PANTHER" id="PTHR22951:SF76">
    <property type="entry name" value="OS09G0468150 PROTEIN"/>
    <property type="match status" value="1"/>
</dbReference>
<dbReference type="Pfam" id="PF07651">
    <property type="entry name" value="ANTH"/>
    <property type="match status" value="1"/>
</dbReference>
<dbReference type="SMART" id="SM00273">
    <property type="entry name" value="ENTH"/>
    <property type="match status" value="1"/>
</dbReference>
<dbReference type="SUPFAM" id="SSF48464">
    <property type="entry name" value="ENTH/VHS domain"/>
    <property type="match status" value="1"/>
</dbReference>
<dbReference type="PROSITE" id="PS50942">
    <property type="entry name" value="ENTH"/>
    <property type="match status" value="1"/>
</dbReference>
<name>CAP16_ARATH</name>
<accession>Q8L936</accession>
<accession>Q9SMP9</accession>
<sequence>MGRITSFADLIGRIKDKASQSKAALVSSNTKSKTLSFHLSVLRATTHDPSTPPGNRHLAVILSAGTGSRATASSAVESIMERLHTTGDACVALKSLIIIHHIVKHGRFILQDQLSVFPASGGRNYLKLSAFRDEKSPLMWELSSWVRWYALYLEHLLSTSRIMGFFISSTSSTIHKEEYEEMVSSLTNSDLLREIDALVGLLEEACKIPDLPFSGGKSLADKITQLVGEDYVSSINELYTRFNEFKERSNTLSFGDTIELVCALKRLESCKERLSEICHGNWKRGWIDGFWGLVLEVKGIIGNLEDNYGQIEKSIVGFGKRDKGYESARFTDRLIIGYSNPVRFSSGRFSNVDRFNFPVSGRVLC</sequence>